<accession>Q47033</accession>
<keyword id="KW-1015">Disulfide bond</keyword>
<keyword id="KW-0281">Fimbrium</keyword>
<keyword id="KW-0430">Lectin</keyword>
<keyword id="KW-0732">Signal</keyword>
<keyword id="KW-0843">Virulence</keyword>
<proteinExistence type="evidence at protein level"/>
<reference key="1">
    <citation type="journal article" date="1997" name="Res. Microbiol.">
        <title>Human uropathogenic and bovine septicaemic Escherichia coli strains carry an identical F17-related adhesin.</title>
        <authorList>
            <person name="Martin C."/>
            <person name="Rousset E."/>
            <person name="De Greve H.M.J."/>
        </authorList>
    </citation>
    <scope>NUCLEOTIDE SEQUENCE [GENOMIC DNA]</scope>
    <scope>FUNCTION IN ADHESION TO HOST CELLS</scope>
    <source>
        <strain>31A/o6</strain>
    </source>
</reference>
<protein>
    <recommendedName>
        <fullName>F17c-G fimbrial adhesin</fullName>
    </recommendedName>
    <alternativeName>
        <fullName>Adhesin 20K</fullName>
    </alternativeName>
</protein>
<feature type="signal peptide" evidence="1">
    <location>
        <begin position="1"/>
        <end position="22"/>
    </location>
</feature>
<feature type="chain" id="PRO_0000356267" description="F17c-G fimbrial adhesin">
    <location>
        <begin position="23"/>
        <end position="343"/>
    </location>
</feature>
<feature type="region of interest" description="Receptor-binding lectin domain" evidence="1">
    <location>
        <begin position="23"/>
        <end position="199"/>
    </location>
</feature>
<feature type="region of interest" description="Fimbrillin-binding domain" evidence="1">
    <location>
        <begin position="200"/>
        <end position="343"/>
    </location>
</feature>
<feature type="region of interest" description="Disordered" evidence="2">
    <location>
        <begin position="287"/>
        <end position="307"/>
    </location>
</feature>
<feature type="compositionally biased region" description="Polar residues" evidence="2">
    <location>
        <begin position="298"/>
        <end position="307"/>
    </location>
</feature>
<feature type="binding site" evidence="1">
    <location>
        <begin position="65"/>
        <end position="66"/>
    </location>
    <ligand>
        <name>a carbohydrate</name>
        <dbReference type="ChEBI" id="CHEBI:16646"/>
    </ligand>
</feature>
<feature type="binding site" evidence="1">
    <location>
        <begin position="110"/>
        <end position="111"/>
    </location>
    <ligand>
        <name>a carbohydrate</name>
        <dbReference type="ChEBI" id="CHEBI:16646"/>
    </ligand>
</feature>
<feature type="binding site" evidence="1">
    <location>
        <begin position="138"/>
        <end position="141"/>
    </location>
    <ligand>
        <name>a carbohydrate</name>
        <dbReference type="ChEBI" id="CHEBI:16646"/>
    </ligand>
</feature>
<feature type="disulfide bond" evidence="1">
    <location>
        <begin position="75"/>
        <end position="132"/>
    </location>
</feature>
<gene>
    <name type="primary">f17cG</name>
</gene>
<comment type="function">
    <text evidence="1 3">Essential fimbrial adhesion factor that mediates binding to N-acetylglucosamine-containing receptors in the host intestinal microvilli, leading to colonization of the intestinal tissue, and diarrhea or septicemia. Also confers adhesiveness to laminin and basement membranes (By similarity).</text>
</comment>
<comment type="subcellular location">
    <subcellularLocation>
        <location evidence="1">Fimbrium</location>
    </subcellularLocation>
    <text evidence="1">Attached to the tip of the fimbrial filaments.</text>
</comment>
<comment type="similarity">
    <text evidence="4">Belongs to the fimbrial protein family.</text>
</comment>
<dbReference type="EMBL" id="L43374">
    <property type="protein sequence ID" value="AAA85086.1"/>
    <property type="molecule type" value="Genomic_DNA"/>
</dbReference>
<dbReference type="SMR" id="Q47033"/>
<dbReference type="PATRIC" id="fig|562.7958.peg.4039"/>
<dbReference type="GO" id="GO:0009289">
    <property type="term" value="C:pilus"/>
    <property type="evidence" value="ECO:0007669"/>
    <property type="project" value="UniProtKB-SubCell"/>
</dbReference>
<dbReference type="GO" id="GO:0030246">
    <property type="term" value="F:carbohydrate binding"/>
    <property type="evidence" value="ECO:0007669"/>
    <property type="project" value="UniProtKB-KW"/>
</dbReference>
<dbReference type="GO" id="GO:0044406">
    <property type="term" value="P:adhesion of symbiont to host"/>
    <property type="evidence" value="ECO:0007669"/>
    <property type="project" value="InterPro"/>
</dbReference>
<dbReference type="GO" id="GO:0043709">
    <property type="term" value="P:cell adhesion involved in single-species biofilm formation"/>
    <property type="evidence" value="ECO:0007669"/>
    <property type="project" value="TreeGrafter"/>
</dbReference>
<dbReference type="Gene3D" id="2.60.40.1410">
    <property type="entry name" value="Bacterial adhesins - F17c-type"/>
    <property type="match status" value="1"/>
</dbReference>
<dbReference type="Gene3D" id="2.60.40.1090">
    <property type="entry name" value="Fimbrial-type adhesion domain"/>
    <property type="match status" value="1"/>
</dbReference>
<dbReference type="InterPro" id="IPR000259">
    <property type="entry name" value="Adhesion_dom_fimbrial"/>
</dbReference>
<dbReference type="InterPro" id="IPR036937">
    <property type="entry name" value="Adhesion_dom_fimbrial_sf"/>
</dbReference>
<dbReference type="InterPro" id="IPR008966">
    <property type="entry name" value="Adhesion_dom_sf"/>
</dbReference>
<dbReference type="InterPro" id="IPR050263">
    <property type="entry name" value="Bact_Fimbrial_Adh_Pro"/>
</dbReference>
<dbReference type="InterPro" id="IPR015303">
    <property type="entry name" value="Fimbrial_adhesin_lectin_dom"/>
</dbReference>
<dbReference type="PANTHER" id="PTHR33420">
    <property type="entry name" value="FIMBRIAL SUBUNIT ELFA-RELATED"/>
    <property type="match status" value="1"/>
</dbReference>
<dbReference type="PANTHER" id="PTHR33420:SF14">
    <property type="entry name" value="TYPE 1 FIMBRIN D-MANNOSE SPECIFIC ADHESIN"/>
    <property type="match status" value="1"/>
</dbReference>
<dbReference type="Pfam" id="PF09222">
    <property type="entry name" value="Fim-adh_lectin"/>
    <property type="match status" value="1"/>
</dbReference>
<dbReference type="Pfam" id="PF00419">
    <property type="entry name" value="Fimbrial"/>
    <property type="match status" value="1"/>
</dbReference>
<dbReference type="SUPFAM" id="SSF49401">
    <property type="entry name" value="Bacterial adhesins"/>
    <property type="match status" value="2"/>
</dbReference>
<sequence>MTNFYKVFLAVFILVCCNISHAAVSFIGSTENDVGPSQGSYSSTHAMDNLPFVYNTGYNIGYQNANVWRISGGFCVGLDGKVDLPVVGSLDGQSIYGLTEEVGLLIWMGDTNYSRGTAMSGNSWENVFSGWCVGNYVSTQGLSVHVRPVILKRNSSAQYSVQKTSIGSIRMRPYNGSSAGSVQTTVNFSLNPFTLNDTVTSCRLLTPSAVNVSLAAISAGQLPSSGDEVVAGTTSLKLQCDAGVTVWATLTDATTPSNRSDILTLTGASTATGVGLRIYKNTDSTPLKFGPDSPVKGNENQWQLSTGTETSPSVRLYVKYVNTGEGINPGTVNGISTFTFSYQ</sequence>
<name>F17CG_ECOLX</name>
<evidence type="ECO:0000250" key="1"/>
<evidence type="ECO:0000256" key="2">
    <source>
        <dbReference type="SAM" id="MobiDB-lite"/>
    </source>
</evidence>
<evidence type="ECO:0000269" key="3">
    <source>
    </source>
</evidence>
<evidence type="ECO:0000305" key="4"/>
<organism>
    <name type="scientific">Escherichia coli</name>
    <dbReference type="NCBI Taxonomy" id="562"/>
    <lineage>
        <taxon>Bacteria</taxon>
        <taxon>Pseudomonadati</taxon>
        <taxon>Pseudomonadota</taxon>
        <taxon>Gammaproteobacteria</taxon>
        <taxon>Enterobacterales</taxon>
        <taxon>Enterobacteriaceae</taxon>
        <taxon>Escherichia</taxon>
    </lineage>
</organism>